<dbReference type="EMBL" id="AB025411">
    <property type="protein sequence ID" value="BAA77397.1"/>
    <property type="molecule type" value="mRNA"/>
</dbReference>
<dbReference type="EMBL" id="AL713956">
    <property type="protein sequence ID" value="CAI35933.1"/>
    <property type="molecule type" value="Genomic_DNA"/>
</dbReference>
<dbReference type="EMBL" id="AL645912">
    <property type="protein sequence ID" value="CAI35933.1"/>
    <property type="status" value="JOINED"/>
    <property type="molecule type" value="Genomic_DNA"/>
</dbReference>
<dbReference type="EMBL" id="AL713915">
    <property type="protein sequence ID" value="CAI35933.1"/>
    <property type="status" value="JOINED"/>
    <property type="molecule type" value="Genomic_DNA"/>
</dbReference>
<dbReference type="EMBL" id="AL713919">
    <property type="protein sequence ID" value="CAI35933.1"/>
    <property type="status" value="JOINED"/>
    <property type="molecule type" value="Genomic_DNA"/>
</dbReference>
<dbReference type="EMBL" id="BX000433">
    <property type="protein sequence ID" value="CAI35933.1"/>
    <property type="status" value="JOINED"/>
    <property type="molecule type" value="Genomic_DNA"/>
</dbReference>
<dbReference type="EMBL" id="BX539311">
    <property type="protein sequence ID" value="CAI35933.1"/>
    <property type="status" value="JOINED"/>
    <property type="molecule type" value="Genomic_DNA"/>
</dbReference>
<dbReference type="EMBL" id="AL713956">
    <property type="protein sequence ID" value="CAI35934.1"/>
    <property type="molecule type" value="Genomic_DNA"/>
</dbReference>
<dbReference type="EMBL" id="AL645912">
    <property type="protein sequence ID" value="CAI35934.1"/>
    <property type="status" value="JOINED"/>
    <property type="molecule type" value="Genomic_DNA"/>
</dbReference>
<dbReference type="EMBL" id="AL713915">
    <property type="protein sequence ID" value="CAI35934.1"/>
    <property type="status" value="JOINED"/>
    <property type="molecule type" value="Genomic_DNA"/>
</dbReference>
<dbReference type="EMBL" id="AL713919">
    <property type="protein sequence ID" value="CAI35934.1"/>
    <property type="status" value="JOINED"/>
    <property type="molecule type" value="Genomic_DNA"/>
</dbReference>
<dbReference type="EMBL" id="BX539311">
    <property type="protein sequence ID" value="CAI35934.1"/>
    <property type="status" value="JOINED"/>
    <property type="molecule type" value="Genomic_DNA"/>
</dbReference>
<dbReference type="EMBL" id="BX000433">
    <property type="protein sequence ID" value="CAI35934.1"/>
    <property type="status" value="JOINED"/>
    <property type="molecule type" value="Genomic_DNA"/>
</dbReference>
<dbReference type="EMBL" id="BX539311">
    <property type="protein sequence ID" value="CAI36037.1"/>
    <property type="molecule type" value="Genomic_DNA"/>
</dbReference>
<dbReference type="EMBL" id="AL645912">
    <property type="protein sequence ID" value="CAI36037.1"/>
    <property type="status" value="JOINED"/>
    <property type="molecule type" value="Genomic_DNA"/>
</dbReference>
<dbReference type="EMBL" id="AL713915">
    <property type="protein sequence ID" value="CAI36037.1"/>
    <property type="status" value="JOINED"/>
    <property type="molecule type" value="Genomic_DNA"/>
</dbReference>
<dbReference type="EMBL" id="AL713919">
    <property type="protein sequence ID" value="CAI36037.1"/>
    <property type="status" value="JOINED"/>
    <property type="molecule type" value="Genomic_DNA"/>
</dbReference>
<dbReference type="EMBL" id="AL713956">
    <property type="protein sequence ID" value="CAI36037.1"/>
    <property type="status" value="JOINED"/>
    <property type="molecule type" value="Genomic_DNA"/>
</dbReference>
<dbReference type="EMBL" id="BX000433">
    <property type="protein sequence ID" value="CAI36037.1"/>
    <property type="status" value="JOINED"/>
    <property type="molecule type" value="Genomic_DNA"/>
</dbReference>
<dbReference type="EMBL" id="BX539311">
    <property type="protein sequence ID" value="CAI36038.1"/>
    <property type="molecule type" value="Genomic_DNA"/>
</dbReference>
<dbReference type="EMBL" id="AL645912">
    <property type="protein sequence ID" value="CAI36038.1"/>
    <property type="status" value="JOINED"/>
    <property type="molecule type" value="Genomic_DNA"/>
</dbReference>
<dbReference type="EMBL" id="AL713915">
    <property type="protein sequence ID" value="CAI36038.1"/>
    <property type="status" value="JOINED"/>
    <property type="molecule type" value="Genomic_DNA"/>
</dbReference>
<dbReference type="EMBL" id="AL713919">
    <property type="protein sequence ID" value="CAI36038.1"/>
    <property type="status" value="JOINED"/>
    <property type="molecule type" value="Genomic_DNA"/>
</dbReference>
<dbReference type="EMBL" id="AL713956">
    <property type="protein sequence ID" value="CAI36038.1"/>
    <property type="status" value="JOINED"/>
    <property type="molecule type" value="Genomic_DNA"/>
</dbReference>
<dbReference type="EMBL" id="BX000433">
    <property type="protein sequence ID" value="CAI36038.1"/>
    <property type="status" value="JOINED"/>
    <property type="molecule type" value="Genomic_DNA"/>
</dbReference>
<dbReference type="EMBL" id="AL713919">
    <property type="protein sequence ID" value="CAI35941.1"/>
    <property type="molecule type" value="Genomic_DNA"/>
</dbReference>
<dbReference type="EMBL" id="AL645912">
    <property type="protein sequence ID" value="CAI35941.1"/>
    <property type="status" value="JOINED"/>
    <property type="molecule type" value="Genomic_DNA"/>
</dbReference>
<dbReference type="EMBL" id="AL713915">
    <property type="protein sequence ID" value="CAI35941.1"/>
    <property type="status" value="JOINED"/>
    <property type="molecule type" value="Genomic_DNA"/>
</dbReference>
<dbReference type="EMBL" id="AL713956">
    <property type="protein sequence ID" value="CAI35941.1"/>
    <property type="status" value="JOINED"/>
    <property type="molecule type" value="Genomic_DNA"/>
</dbReference>
<dbReference type="EMBL" id="BX000433">
    <property type="protein sequence ID" value="CAI35941.1"/>
    <property type="status" value="JOINED"/>
    <property type="molecule type" value="Genomic_DNA"/>
</dbReference>
<dbReference type="EMBL" id="BX539311">
    <property type="protein sequence ID" value="CAI35941.1"/>
    <property type="status" value="JOINED"/>
    <property type="molecule type" value="Genomic_DNA"/>
</dbReference>
<dbReference type="EMBL" id="AL713919">
    <property type="protein sequence ID" value="CAI35942.1"/>
    <property type="molecule type" value="Genomic_DNA"/>
</dbReference>
<dbReference type="EMBL" id="AL645912">
    <property type="protein sequence ID" value="CAI35942.1"/>
    <property type="status" value="JOINED"/>
    <property type="molecule type" value="Genomic_DNA"/>
</dbReference>
<dbReference type="EMBL" id="AL713915">
    <property type="protein sequence ID" value="CAI35942.1"/>
    <property type="status" value="JOINED"/>
    <property type="molecule type" value="Genomic_DNA"/>
</dbReference>
<dbReference type="EMBL" id="AL713956">
    <property type="protein sequence ID" value="CAI35942.1"/>
    <property type="status" value="JOINED"/>
    <property type="molecule type" value="Genomic_DNA"/>
</dbReference>
<dbReference type="EMBL" id="BX539311">
    <property type="protein sequence ID" value="CAI35942.1"/>
    <property type="status" value="JOINED"/>
    <property type="molecule type" value="Genomic_DNA"/>
</dbReference>
<dbReference type="EMBL" id="BX000433">
    <property type="protein sequence ID" value="CAI35942.1"/>
    <property type="status" value="JOINED"/>
    <property type="molecule type" value="Genomic_DNA"/>
</dbReference>
<dbReference type="EMBL" id="AL713915">
    <property type="protein sequence ID" value="CAI35944.1"/>
    <property type="molecule type" value="Genomic_DNA"/>
</dbReference>
<dbReference type="EMBL" id="AL645912">
    <property type="protein sequence ID" value="CAI35944.1"/>
    <property type="status" value="JOINED"/>
    <property type="molecule type" value="Genomic_DNA"/>
</dbReference>
<dbReference type="EMBL" id="AL713919">
    <property type="protein sequence ID" value="CAI35944.1"/>
    <property type="status" value="JOINED"/>
    <property type="molecule type" value="Genomic_DNA"/>
</dbReference>
<dbReference type="EMBL" id="AL713956">
    <property type="protein sequence ID" value="CAI35944.1"/>
    <property type="status" value="JOINED"/>
    <property type="molecule type" value="Genomic_DNA"/>
</dbReference>
<dbReference type="EMBL" id="BX000433">
    <property type="protein sequence ID" value="CAI35944.1"/>
    <property type="status" value="JOINED"/>
    <property type="molecule type" value="Genomic_DNA"/>
</dbReference>
<dbReference type="EMBL" id="BX539311">
    <property type="protein sequence ID" value="CAI35944.1"/>
    <property type="status" value="JOINED"/>
    <property type="molecule type" value="Genomic_DNA"/>
</dbReference>
<dbReference type="EMBL" id="AL713915">
    <property type="protein sequence ID" value="CAI35945.1"/>
    <property type="molecule type" value="Genomic_DNA"/>
</dbReference>
<dbReference type="EMBL" id="BX539311">
    <property type="protein sequence ID" value="CAI35945.1"/>
    <property type="status" value="JOINED"/>
    <property type="molecule type" value="Genomic_DNA"/>
</dbReference>
<dbReference type="EMBL" id="BX000433">
    <property type="protein sequence ID" value="CAI35945.1"/>
    <property type="status" value="JOINED"/>
    <property type="molecule type" value="Genomic_DNA"/>
</dbReference>
<dbReference type="EMBL" id="AL713956">
    <property type="protein sequence ID" value="CAI35945.1"/>
    <property type="status" value="JOINED"/>
    <property type="molecule type" value="Genomic_DNA"/>
</dbReference>
<dbReference type="EMBL" id="AL713919">
    <property type="protein sequence ID" value="CAI35945.1"/>
    <property type="status" value="JOINED"/>
    <property type="molecule type" value="Genomic_DNA"/>
</dbReference>
<dbReference type="EMBL" id="AL645912">
    <property type="protein sequence ID" value="CAI35945.1"/>
    <property type="status" value="JOINED"/>
    <property type="molecule type" value="Genomic_DNA"/>
</dbReference>
<dbReference type="EMBL" id="BX000433">
    <property type="protein sequence ID" value="CAI35946.1"/>
    <property type="molecule type" value="Genomic_DNA"/>
</dbReference>
<dbReference type="EMBL" id="AL645912">
    <property type="protein sequence ID" value="CAI35946.1"/>
    <property type="status" value="JOINED"/>
    <property type="molecule type" value="Genomic_DNA"/>
</dbReference>
<dbReference type="EMBL" id="AL713915">
    <property type="protein sequence ID" value="CAI35946.1"/>
    <property type="status" value="JOINED"/>
    <property type="molecule type" value="Genomic_DNA"/>
</dbReference>
<dbReference type="EMBL" id="AL713919">
    <property type="protein sequence ID" value="CAI35946.1"/>
    <property type="status" value="JOINED"/>
    <property type="molecule type" value="Genomic_DNA"/>
</dbReference>
<dbReference type="EMBL" id="AL713956">
    <property type="protein sequence ID" value="CAI35946.1"/>
    <property type="status" value="JOINED"/>
    <property type="molecule type" value="Genomic_DNA"/>
</dbReference>
<dbReference type="EMBL" id="BX539311">
    <property type="protein sequence ID" value="CAI35946.1"/>
    <property type="status" value="JOINED"/>
    <property type="molecule type" value="Genomic_DNA"/>
</dbReference>
<dbReference type="EMBL" id="BX000433">
    <property type="protein sequence ID" value="CAI35947.1"/>
    <property type="molecule type" value="Genomic_DNA"/>
</dbReference>
<dbReference type="EMBL" id="AL645912">
    <property type="protein sequence ID" value="CAI35947.1"/>
    <property type="status" value="JOINED"/>
    <property type="molecule type" value="Genomic_DNA"/>
</dbReference>
<dbReference type="EMBL" id="AL713919">
    <property type="protein sequence ID" value="CAI35947.1"/>
    <property type="status" value="JOINED"/>
    <property type="molecule type" value="Genomic_DNA"/>
</dbReference>
<dbReference type="EMBL" id="AL713956">
    <property type="protein sequence ID" value="CAI35947.1"/>
    <property type="status" value="JOINED"/>
    <property type="molecule type" value="Genomic_DNA"/>
</dbReference>
<dbReference type="EMBL" id="AL713915">
    <property type="protein sequence ID" value="CAI35947.1"/>
    <property type="status" value="JOINED"/>
    <property type="molecule type" value="Genomic_DNA"/>
</dbReference>
<dbReference type="EMBL" id="BX539311">
    <property type="protein sequence ID" value="CAI35947.1"/>
    <property type="status" value="JOINED"/>
    <property type="molecule type" value="Genomic_DNA"/>
</dbReference>
<dbReference type="EMBL" id="AL645912">
    <property type="protein sequence ID" value="CAI35083.1"/>
    <property type="molecule type" value="Genomic_DNA"/>
</dbReference>
<dbReference type="EMBL" id="AL713915">
    <property type="protein sequence ID" value="CAI35083.1"/>
    <property type="status" value="JOINED"/>
    <property type="molecule type" value="Genomic_DNA"/>
</dbReference>
<dbReference type="EMBL" id="AL713919">
    <property type="protein sequence ID" value="CAI35083.1"/>
    <property type="status" value="JOINED"/>
    <property type="molecule type" value="Genomic_DNA"/>
</dbReference>
<dbReference type="EMBL" id="AL713956">
    <property type="protein sequence ID" value="CAI35083.1"/>
    <property type="status" value="JOINED"/>
    <property type="molecule type" value="Genomic_DNA"/>
</dbReference>
<dbReference type="EMBL" id="BX000433">
    <property type="protein sequence ID" value="CAI35083.1"/>
    <property type="status" value="JOINED"/>
    <property type="molecule type" value="Genomic_DNA"/>
</dbReference>
<dbReference type="EMBL" id="BX539311">
    <property type="protein sequence ID" value="CAI35083.1"/>
    <property type="status" value="JOINED"/>
    <property type="molecule type" value="Genomic_DNA"/>
</dbReference>
<dbReference type="EMBL" id="AL645912">
    <property type="protein sequence ID" value="CAI35084.1"/>
    <property type="molecule type" value="Genomic_DNA"/>
</dbReference>
<dbReference type="EMBL" id="AL713915">
    <property type="protein sequence ID" value="CAI35084.1"/>
    <property type="status" value="JOINED"/>
    <property type="molecule type" value="Genomic_DNA"/>
</dbReference>
<dbReference type="EMBL" id="AL713919">
    <property type="protein sequence ID" value="CAI35084.1"/>
    <property type="status" value="JOINED"/>
    <property type="molecule type" value="Genomic_DNA"/>
</dbReference>
<dbReference type="EMBL" id="AL713956">
    <property type="protein sequence ID" value="CAI35084.1"/>
    <property type="status" value="JOINED"/>
    <property type="molecule type" value="Genomic_DNA"/>
</dbReference>
<dbReference type="EMBL" id="BX000433">
    <property type="protein sequence ID" value="CAI35084.1"/>
    <property type="status" value="JOINED"/>
    <property type="molecule type" value="Genomic_DNA"/>
</dbReference>
<dbReference type="EMBL" id="BX539311">
    <property type="protein sequence ID" value="CAI35084.1"/>
    <property type="status" value="JOINED"/>
    <property type="molecule type" value="Genomic_DNA"/>
</dbReference>
<dbReference type="EMBL" id="AJ245710">
    <property type="protein sequence ID" value="CAB57282.1"/>
    <property type="molecule type" value="mRNA"/>
</dbReference>
<dbReference type="EMBL" id="AF195419">
    <property type="protein sequence ID" value="AAF28317.1"/>
    <property type="molecule type" value="mRNA"/>
</dbReference>
<dbReference type="EMBL" id="AK122455">
    <property type="protein sequence ID" value="BAC65737.1"/>
    <property type="molecule type" value="mRNA"/>
</dbReference>
<dbReference type="CCDS" id="CCDS24546.1"/>
<dbReference type="SMR" id="Q9WTS5"/>
<dbReference type="FunCoup" id="Q9WTS5">
    <property type="interactions" value="455"/>
</dbReference>
<dbReference type="IntAct" id="Q9WTS5">
    <property type="interactions" value="3"/>
</dbReference>
<dbReference type="MINT" id="Q9WTS5"/>
<dbReference type="STRING" id="10090.ENSMUSP00000099865"/>
<dbReference type="GlyConnect" id="2756">
    <property type="glycosylation" value="10 N-Linked glycans (6 sites)"/>
</dbReference>
<dbReference type="GlyCosmos" id="Q9WTS5">
    <property type="glycosylation" value="15 sites, 10 glycans"/>
</dbReference>
<dbReference type="GlyGen" id="Q9WTS5">
    <property type="glycosylation" value="18 sites, 17 N-linked glycans (12 sites), 1 O-linked glycan (1 site)"/>
</dbReference>
<dbReference type="iPTMnet" id="Q9WTS5"/>
<dbReference type="PhosphoSitePlus" id="Q9WTS5"/>
<dbReference type="PaxDb" id="10090-ENSMUSP00000052014"/>
<dbReference type="ProteomicsDB" id="263034"/>
<dbReference type="AGR" id="MGI:1345184"/>
<dbReference type="MGI" id="MGI:1345184">
    <property type="gene designation" value="Tenm2"/>
</dbReference>
<dbReference type="eggNOG" id="KOG1225">
    <property type="taxonomic scope" value="Eukaryota"/>
</dbReference>
<dbReference type="eggNOG" id="KOG4659">
    <property type="taxonomic scope" value="Eukaryota"/>
</dbReference>
<dbReference type="InParanoid" id="Q9WTS5"/>
<dbReference type="PhylomeDB" id="Q9WTS5"/>
<dbReference type="TreeFam" id="TF316833"/>
<dbReference type="ChiTaRS" id="Tenm2">
    <property type="organism name" value="mouse"/>
</dbReference>
<dbReference type="PRO" id="PR:Q9WTS5"/>
<dbReference type="Proteomes" id="UP000000589">
    <property type="component" value="Unplaced"/>
</dbReference>
<dbReference type="RNAct" id="Q9WTS5">
    <property type="molecule type" value="protein"/>
</dbReference>
<dbReference type="GO" id="GO:0030054">
    <property type="term" value="C:cell junction"/>
    <property type="evidence" value="ECO:0000250"/>
    <property type="project" value="UniProtKB"/>
</dbReference>
<dbReference type="GO" id="GO:0005911">
    <property type="term" value="C:cell-cell junction"/>
    <property type="evidence" value="ECO:0000250"/>
    <property type="project" value="UniProtKB"/>
</dbReference>
<dbReference type="GO" id="GO:0030425">
    <property type="term" value="C:dendrite"/>
    <property type="evidence" value="ECO:0000250"/>
    <property type="project" value="UniProtKB"/>
</dbReference>
<dbReference type="GO" id="GO:0043197">
    <property type="term" value="C:dendritic spine"/>
    <property type="evidence" value="ECO:0000250"/>
    <property type="project" value="UniProtKB"/>
</dbReference>
<dbReference type="GO" id="GO:0005783">
    <property type="term" value="C:endoplasmic reticulum"/>
    <property type="evidence" value="ECO:0000250"/>
    <property type="project" value="UniProtKB"/>
</dbReference>
<dbReference type="GO" id="GO:0030175">
    <property type="term" value="C:filopodium"/>
    <property type="evidence" value="ECO:0000250"/>
    <property type="project" value="UniProtKB"/>
</dbReference>
<dbReference type="GO" id="GO:0005794">
    <property type="term" value="C:Golgi apparatus"/>
    <property type="evidence" value="ECO:0000250"/>
    <property type="project" value="UniProtKB"/>
</dbReference>
<dbReference type="GO" id="GO:0030426">
    <property type="term" value="C:growth cone"/>
    <property type="evidence" value="ECO:0000250"/>
    <property type="project" value="UniProtKB"/>
</dbReference>
<dbReference type="GO" id="GO:0043005">
    <property type="term" value="C:neuron projection"/>
    <property type="evidence" value="ECO:0000250"/>
    <property type="project" value="UniProtKB"/>
</dbReference>
<dbReference type="GO" id="GO:0005634">
    <property type="term" value="C:nucleus"/>
    <property type="evidence" value="ECO:0000250"/>
    <property type="project" value="UniProtKB"/>
</dbReference>
<dbReference type="GO" id="GO:0005886">
    <property type="term" value="C:plasma membrane"/>
    <property type="evidence" value="ECO:0000250"/>
    <property type="project" value="UniProtKB"/>
</dbReference>
<dbReference type="GO" id="GO:0016605">
    <property type="term" value="C:PML body"/>
    <property type="evidence" value="ECO:0000250"/>
    <property type="project" value="UniProtKB"/>
</dbReference>
<dbReference type="GO" id="GO:0045211">
    <property type="term" value="C:postsynaptic membrane"/>
    <property type="evidence" value="ECO:0000250"/>
    <property type="project" value="UniProtKB"/>
</dbReference>
<dbReference type="GO" id="GO:0045202">
    <property type="term" value="C:synapse"/>
    <property type="evidence" value="ECO:0000250"/>
    <property type="project" value="UniProtKB"/>
</dbReference>
<dbReference type="GO" id="GO:0050839">
    <property type="term" value="F:cell adhesion molecule binding"/>
    <property type="evidence" value="ECO:0000250"/>
    <property type="project" value="UniProtKB"/>
</dbReference>
<dbReference type="GO" id="GO:0042802">
    <property type="term" value="F:identical protein binding"/>
    <property type="evidence" value="ECO:0000353"/>
    <property type="project" value="MGI"/>
</dbReference>
<dbReference type="GO" id="GO:0046982">
    <property type="term" value="F:protein heterodimerization activity"/>
    <property type="evidence" value="ECO:0000314"/>
    <property type="project" value="UniProtKB"/>
</dbReference>
<dbReference type="GO" id="GO:0042803">
    <property type="term" value="F:protein homodimerization activity"/>
    <property type="evidence" value="ECO:0000314"/>
    <property type="project" value="UniProtKB"/>
</dbReference>
<dbReference type="GO" id="GO:0005102">
    <property type="term" value="F:signaling receptor binding"/>
    <property type="evidence" value="ECO:0000250"/>
    <property type="project" value="UniProtKB"/>
</dbReference>
<dbReference type="GO" id="GO:0098609">
    <property type="term" value="P:cell-cell adhesion"/>
    <property type="evidence" value="ECO:0000250"/>
    <property type="project" value="UniProtKB"/>
</dbReference>
<dbReference type="GO" id="GO:0000122">
    <property type="term" value="P:negative regulation of transcription by RNA polymerase II"/>
    <property type="evidence" value="ECO:0000250"/>
    <property type="project" value="UniProtKB"/>
</dbReference>
<dbReference type="GO" id="GO:0051491">
    <property type="term" value="P:positive regulation of filopodium assembly"/>
    <property type="evidence" value="ECO:0000250"/>
    <property type="project" value="UniProtKB"/>
</dbReference>
<dbReference type="GO" id="GO:0007165">
    <property type="term" value="P:signal transduction"/>
    <property type="evidence" value="ECO:0007669"/>
    <property type="project" value="InterPro"/>
</dbReference>
<dbReference type="CDD" id="cd00054">
    <property type="entry name" value="EGF_CA"/>
    <property type="match status" value="3"/>
</dbReference>
<dbReference type="FunFam" id="2.60.120.260:FF:000176">
    <property type="entry name" value="Si:ch211-12m10.1"/>
    <property type="match status" value="1"/>
</dbReference>
<dbReference type="FunFam" id="2.10.25.10:FF:000016">
    <property type="entry name" value="Teneurin transmembrane protein 2"/>
    <property type="match status" value="1"/>
</dbReference>
<dbReference type="FunFam" id="2.10.25.10:FF:000021">
    <property type="entry name" value="Teneurin transmembrane protein 2"/>
    <property type="match status" value="2"/>
</dbReference>
<dbReference type="FunFam" id="2.10.25.10:FF:000026">
    <property type="entry name" value="Teneurin transmembrane protein 2"/>
    <property type="match status" value="1"/>
</dbReference>
<dbReference type="FunFam" id="2.10.25.10:FF:000474">
    <property type="entry name" value="Teneurin transmembrane protein 2"/>
    <property type="match status" value="1"/>
</dbReference>
<dbReference type="FunFam" id="2.120.10.30:FF:000003">
    <property type="entry name" value="Teneurin transmembrane protein 2"/>
    <property type="match status" value="1"/>
</dbReference>
<dbReference type="FunFam" id="2.10.25.10:FF:000013">
    <property type="entry name" value="Teneurin transmembrane protein 4"/>
    <property type="match status" value="1"/>
</dbReference>
<dbReference type="FunFam" id="2.120.10.30:FF:000061">
    <property type="entry name" value="teneurin-2 isoform X1"/>
    <property type="match status" value="1"/>
</dbReference>
<dbReference type="Gene3D" id="2.10.25.10">
    <property type="entry name" value="Laminin"/>
    <property type="match status" value="7"/>
</dbReference>
<dbReference type="Gene3D" id="2.180.10.10">
    <property type="entry name" value="RHS repeat-associated core"/>
    <property type="match status" value="1"/>
</dbReference>
<dbReference type="Gene3D" id="2.120.10.30">
    <property type="entry name" value="TolB, C-terminal domain"/>
    <property type="match status" value="2"/>
</dbReference>
<dbReference type="InterPro" id="IPR011042">
    <property type="entry name" value="6-blade_b-propeller_TolB-like"/>
</dbReference>
<dbReference type="InterPro" id="IPR008969">
    <property type="entry name" value="CarboxyPept-like_regulatory"/>
</dbReference>
<dbReference type="InterPro" id="IPR000742">
    <property type="entry name" value="EGF-like_dom"/>
</dbReference>
<dbReference type="InterPro" id="IPR022385">
    <property type="entry name" value="Rhs_assc_core"/>
</dbReference>
<dbReference type="InterPro" id="IPR009471">
    <property type="entry name" value="Ten_N"/>
</dbReference>
<dbReference type="InterPro" id="IPR056822">
    <property type="entry name" value="TEN_NHL"/>
</dbReference>
<dbReference type="InterPro" id="IPR056820">
    <property type="entry name" value="TEN_TTR-like"/>
</dbReference>
<dbReference type="InterPro" id="IPR056823">
    <property type="entry name" value="TEN_YD-shell"/>
</dbReference>
<dbReference type="InterPro" id="IPR051216">
    <property type="entry name" value="Teneurin"/>
</dbReference>
<dbReference type="InterPro" id="IPR028916">
    <property type="entry name" value="Tox-GHH_dom"/>
</dbReference>
<dbReference type="InterPro" id="IPR006530">
    <property type="entry name" value="YD"/>
</dbReference>
<dbReference type="NCBIfam" id="TIGR03696">
    <property type="entry name" value="Rhs_assc_core"/>
    <property type="match status" value="1"/>
</dbReference>
<dbReference type="NCBIfam" id="TIGR01643">
    <property type="entry name" value="YD_repeat_2x"/>
    <property type="match status" value="1"/>
</dbReference>
<dbReference type="PANTHER" id="PTHR11219">
    <property type="entry name" value="TENEURIN AND N-ACETYLGLUCOSAMINE-1-PHOSPHODIESTER ALPHA-N-ACETYLGLUCOSAMINIDASE"/>
    <property type="match status" value="1"/>
</dbReference>
<dbReference type="PANTHER" id="PTHR11219:SF8">
    <property type="entry name" value="TENEURIN-2"/>
    <property type="match status" value="1"/>
</dbReference>
<dbReference type="Pfam" id="PF25024">
    <property type="entry name" value="EGF_TEN"/>
    <property type="match status" value="1"/>
</dbReference>
<dbReference type="Pfam" id="PF24329">
    <property type="entry name" value="FN-plug_TEN1-4"/>
    <property type="match status" value="1"/>
</dbReference>
<dbReference type="Pfam" id="PF23093">
    <property type="entry name" value="GBD_Tenm3"/>
    <property type="match status" value="1"/>
</dbReference>
<dbReference type="Pfam" id="PF06484">
    <property type="entry name" value="Ten_N"/>
    <property type="match status" value="1"/>
</dbReference>
<dbReference type="Pfam" id="PF25021">
    <property type="entry name" value="TEN_NHL"/>
    <property type="match status" value="1"/>
</dbReference>
<dbReference type="Pfam" id="PF25023">
    <property type="entry name" value="TEN_YD-shell"/>
    <property type="match status" value="1"/>
</dbReference>
<dbReference type="Pfam" id="PF23538">
    <property type="entry name" value="Teneurin_ABD"/>
    <property type="match status" value="1"/>
</dbReference>
<dbReference type="Pfam" id="PF15636">
    <property type="entry name" value="Tox-GHH"/>
    <property type="match status" value="1"/>
</dbReference>
<dbReference type="Pfam" id="PF25020">
    <property type="entry name" value="TTR_TEN1-4"/>
    <property type="match status" value="1"/>
</dbReference>
<dbReference type="SMART" id="SM00181">
    <property type="entry name" value="EGF"/>
    <property type="match status" value="8"/>
</dbReference>
<dbReference type="SUPFAM" id="SSF49464">
    <property type="entry name" value="Carboxypeptidase regulatory domain-like"/>
    <property type="match status" value="1"/>
</dbReference>
<dbReference type="SUPFAM" id="SSF82171">
    <property type="entry name" value="DPP6 N-terminal domain-like"/>
    <property type="match status" value="1"/>
</dbReference>
<dbReference type="SUPFAM" id="SSF101898">
    <property type="entry name" value="NHL repeat"/>
    <property type="match status" value="1"/>
</dbReference>
<dbReference type="PROSITE" id="PS00022">
    <property type="entry name" value="EGF_1"/>
    <property type="match status" value="8"/>
</dbReference>
<dbReference type="PROSITE" id="PS01186">
    <property type="entry name" value="EGF_2"/>
    <property type="match status" value="7"/>
</dbReference>
<dbReference type="PROSITE" id="PS50026">
    <property type="entry name" value="EGF_3"/>
    <property type="match status" value="4"/>
</dbReference>
<dbReference type="PROSITE" id="PS51361">
    <property type="entry name" value="TENEURIN_N"/>
    <property type="match status" value="1"/>
</dbReference>
<keyword id="KW-0130">Cell adhesion</keyword>
<keyword id="KW-1003">Cell membrane</keyword>
<keyword id="KW-0966">Cell projection</keyword>
<keyword id="KW-0165">Cleavage on pair of basic residues</keyword>
<keyword id="KW-1015">Disulfide bond</keyword>
<keyword id="KW-0245">EGF-like domain</keyword>
<keyword id="KW-0256">Endoplasmic reticulum</keyword>
<keyword id="KW-0325">Glycoprotein</keyword>
<keyword id="KW-0333">Golgi apparatus</keyword>
<keyword id="KW-0472">Membrane</keyword>
<keyword id="KW-0539">Nucleus</keyword>
<keyword id="KW-0597">Phosphoprotein</keyword>
<keyword id="KW-0628">Postsynaptic cell membrane</keyword>
<keyword id="KW-1185">Reference proteome</keyword>
<keyword id="KW-0677">Repeat</keyword>
<keyword id="KW-0678">Repressor</keyword>
<keyword id="KW-0770">Synapse</keyword>
<keyword id="KW-0804">Transcription</keyword>
<keyword id="KW-0805">Transcription regulation</keyword>
<keyword id="KW-0812">Transmembrane</keyword>
<keyword id="KW-1133">Transmembrane helix</keyword>
<comment type="function">
    <text evidence="4 10 12">Involved in neural development, regulating the establishment of proper connectivity within the nervous system (PubMed:30792275). Acts as a ligand of the ADGRL1 and ADGRL3 receptors that are expressed at the surface of adjacent cells (PubMed:30792275). Promotes the formation of filopodia and enlarged growth cone in neuronal cells (By similarity). Mediates axon guidance and homophilic and heterophilic cell-cell adhesion (PubMed:12000766). May function as a cellular signal transducer (By similarity).</text>
</comment>
<comment type="function">
    <molecule>Ten-2 intracellular domain</molecule>
    <text evidence="3">Induces gene transcription inhibition.</text>
</comment>
<comment type="subunit">
    <text evidence="4">Homodimer; disulfide-linked (By similarity). Heterodimer with either TENM1 or TENM3 (By similarity). May also form heterodimer with TENM4 (By similarity).</text>
</comment>
<comment type="subcellular location">
    <subcellularLocation>
        <location evidence="4">Cell membrane</location>
        <topology evidence="6">Single-pass membrane protein</topology>
    </subcellularLocation>
    <subcellularLocation>
        <location evidence="12">Presynaptic cell membrane</location>
        <topology evidence="6">Single-pass membrane protein</topology>
    </subcellularLocation>
    <subcellularLocation>
        <location evidence="5">Postsynaptic cell membrane</location>
        <topology evidence="6">Single-pass membrane protein</topology>
    </subcellularLocation>
    <subcellularLocation>
        <location evidence="3">Endoplasmic reticulum</location>
    </subcellularLocation>
    <subcellularLocation>
        <location evidence="3">Golgi apparatus</location>
    </subcellularLocation>
    <subcellularLocation>
        <location evidence="5">Synapse</location>
    </subcellularLocation>
    <subcellularLocation>
        <location evidence="5">Cell projection</location>
        <location evidence="5">Dendritic spine</location>
    </subcellularLocation>
    <subcellularLocation>
        <location evidence="3">Cell projection</location>
        <location evidence="3">Filopodium</location>
    </subcellularLocation>
    <subcellularLocation>
        <location evidence="3">Cell projection</location>
        <location evidence="3">Growth cone</location>
    </subcellularLocation>
</comment>
<comment type="subcellular location">
    <molecule>Ten-2 intracellular domain</molecule>
    <subcellularLocation>
        <location evidence="3">Nucleus</location>
        <location evidence="3">PML body</location>
    </subcellularLocation>
</comment>
<comment type="tissue specificity">
    <text evidence="11">Expressed in the cortex, CA1, CA2, CA3, dentate gyrus and granular layer of the hippocampus. Expressed in the Purkinje cells and molecular layer of the cerebellum.</text>
</comment>
<comment type="developmental stage">
    <text evidence="11">Expressed in the midbrain and spinal cord at 12.5 dpc.</text>
</comment>
<comment type="domain">
    <text>EGF-like domains 2 and 5 which have an odd number of cysteines might enable the formation of intermolecular disulfide bonds.</text>
</comment>
<comment type="domain">
    <text>Cytoplasmic proline-rich regions could serve as docking domains for intracellular SH3-containing proteins.</text>
</comment>
<comment type="PTM">
    <molecule>Ten-2, soluble form</molecule>
    <text evidence="3">Derives from the membrane form by proteolytic processing.</text>
</comment>
<comment type="PTM">
    <molecule>Ten-2 intracellular domain</molecule>
    <text evidence="3">Derives from the plasma membrane form by proteolytic cleavage and translocates to the nucleus. Homophilic binding of the C-terminal extracellular domain stimulates its proteolytic cleavage and release in the cytoplasmic. Is subjected to rapid degradation by the proteasome pathway (By similarity).</text>
</comment>
<comment type="similarity">
    <text evidence="13">Belongs to the tenascin family. Teneurin subfamily.</text>
</comment>
<proteinExistence type="evidence at protein level"/>
<feature type="chain" id="PRO_0000259502" description="Teneurin-2">
    <location>
        <begin position="1"/>
        <end position="2764"/>
    </location>
</feature>
<feature type="chain" id="PRO_0000421013" description="Ten-2 intracellular domain" evidence="1">
    <location>
        <begin position="1"/>
        <end status="unknown"/>
    </location>
</feature>
<feature type="chain" id="PRO_0000421014" description="Ten-2, soluble form" evidence="1">
    <location>
        <begin position="529"/>
        <end position="2764"/>
    </location>
</feature>
<feature type="topological domain" description="Cytoplasmic" evidence="6">
    <location>
        <begin position="1"/>
        <end position="379"/>
    </location>
</feature>
<feature type="transmembrane region" description="Helical" evidence="6">
    <location>
        <begin position="380"/>
        <end position="400"/>
    </location>
</feature>
<feature type="topological domain" description="Extracellular" evidence="6">
    <location>
        <begin position="401"/>
        <end position="2764"/>
    </location>
</feature>
<feature type="domain" description="Teneurin N-terminal" evidence="8">
    <location>
        <begin position="1"/>
        <end position="375"/>
    </location>
</feature>
<feature type="domain" description="EGF-like 1" evidence="7">
    <location>
        <begin position="575"/>
        <end position="603"/>
    </location>
</feature>
<feature type="domain" description="EGF-like 2" evidence="7">
    <location>
        <begin position="598"/>
        <end position="634"/>
    </location>
</feature>
<feature type="domain" description="EGF-like 3" evidence="7">
    <location>
        <begin position="636"/>
        <end position="668"/>
    </location>
</feature>
<feature type="domain" description="EGF-like 4" evidence="7">
    <location>
        <begin position="669"/>
        <end position="701"/>
    </location>
</feature>
<feature type="domain" description="EGF-like 5" evidence="7">
    <location>
        <begin position="702"/>
        <end position="735"/>
    </location>
</feature>
<feature type="domain" description="EGF-like 6" evidence="7">
    <location>
        <begin position="737"/>
        <end position="765"/>
    </location>
</feature>
<feature type="domain" description="EGF-like 7" evidence="7">
    <location>
        <begin position="768"/>
        <end position="796"/>
    </location>
</feature>
<feature type="domain" description="EGF-like 8" evidence="7">
    <location>
        <begin position="798"/>
        <end position="831"/>
    </location>
</feature>
<feature type="repeat" description="NHL 1">
    <location>
        <begin position="1262"/>
        <end position="1306"/>
    </location>
</feature>
<feature type="repeat" description="NHL 2">
    <location>
        <begin position="1332"/>
        <end position="1376"/>
    </location>
</feature>
<feature type="repeat" description="NHL 3">
    <location>
        <begin position="1391"/>
        <end position="1442"/>
    </location>
</feature>
<feature type="repeat" description="NHL 4">
    <location>
        <begin position="1464"/>
        <end position="1491"/>
    </location>
</feature>
<feature type="repeat" description="NHL 5">
    <location>
        <begin position="1520"/>
        <end position="1563"/>
    </location>
</feature>
<feature type="repeat" description="YD 1">
    <location>
        <begin position="1573"/>
        <end position="1592"/>
    </location>
</feature>
<feature type="repeat" description="YD 2">
    <location>
        <begin position="1609"/>
        <end position="1629"/>
    </location>
</feature>
<feature type="repeat" description="YD 3">
    <location>
        <begin position="1672"/>
        <end position="1691"/>
    </location>
</feature>
<feature type="repeat" description="YD 4">
    <location>
        <begin position="1692"/>
        <end position="1714"/>
    </location>
</feature>
<feature type="repeat" description="YD 5">
    <location>
        <begin position="1885"/>
        <end position="1904"/>
    </location>
</feature>
<feature type="repeat" description="YD 6">
    <location>
        <begin position="1926"/>
        <end position="1944"/>
    </location>
</feature>
<feature type="repeat" description="YD 7">
    <location>
        <begin position="1945"/>
        <end position="1965"/>
    </location>
</feature>
<feature type="repeat" description="YD 8">
    <location>
        <begin position="1972"/>
        <end position="1989"/>
    </location>
</feature>
<feature type="repeat" description="YD 9">
    <location>
        <begin position="1990"/>
        <end position="2011"/>
    </location>
</feature>
<feature type="repeat" description="YD 10">
    <location>
        <begin position="2012"/>
        <end position="2029"/>
    </location>
</feature>
<feature type="repeat" description="YD 11">
    <location>
        <begin position="2032"/>
        <end position="2052"/>
    </location>
</feature>
<feature type="repeat" description="YD 12">
    <location>
        <begin position="2055"/>
        <end position="2075"/>
    </location>
</feature>
<feature type="repeat" description="YD 13">
    <location>
        <begin position="2083"/>
        <end position="2103"/>
    </location>
</feature>
<feature type="repeat" description="YD 14">
    <location>
        <begin position="2109"/>
        <end position="2126"/>
    </location>
</feature>
<feature type="repeat" description="YD 15">
    <location>
        <begin position="2127"/>
        <end position="2153"/>
    </location>
</feature>
<feature type="repeat" description="YD 16">
    <location>
        <begin position="2155"/>
        <end position="2168"/>
    </location>
</feature>
<feature type="repeat" description="YD 17">
    <location>
        <begin position="2169"/>
        <end position="2192"/>
    </location>
</feature>
<feature type="repeat" description="YD 18">
    <location>
        <begin position="2195"/>
        <end position="2215"/>
    </location>
</feature>
<feature type="repeat" description="YD 19">
    <location>
        <begin position="2216"/>
        <end position="2236"/>
    </location>
</feature>
<feature type="repeat" description="YD 20">
    <location>
        <begin position="2238"/>
        <end position="2258"/>
    </location>
</feature>
<feature type="repeat" description="YD 21">
    <location>
        <begin position="2270"/>
        <end position="2290"/>
    </location>
</feature>
<feature type="repeat" description="YD 22">
    <location>
        <begin position="2292"/>
        <end position="2312"/>
    </location>
</feature>
<feature type="repeat" description="YD 23">
    <location>
        <begin position="2338"/>
        <end position="2379"/>
    </location>
</feature>
<feature type="region of interest" description="Disordered" evidence="9">
    <location>
        <begin position="111"/>
        <end position="271"/>
    </location>
</feature>
<feature type="compositionally biased region" description="Polar residues" evidence="9">
    <location>
        <begin position="141"/>
        <end position="155"/>
    </location>
</feature>
<feature type="compositionally biased region" description="Basic and acidic residues" evidence="9">
    <location>
        <begin position="159"/>
        <end position="168"/>
    </location>
</feature>
<feature type="compositionally biased region" description="Low complexity" evidence="9">
    <location>
        <begin position="174"/>
        <end position="188"/>
    </location>
</feature>
<feature type="compositionally biased region" description="Polar residues" evidence="9">
    <location>
        <begin position="202"/>
        <end position="211"/>
    </location>
</feature>
<feature type="compositionally biased region" description="Low complexity" evidence="9">
    <location>
        <begin position="229"/>
        <end position="240"/>
    </location>
</feature>
<feature type="site" description="Cleavage" evidence="1">
    <location>
        <begin position="528"/>
        <end position="529"/>
    </location>
</feature>
<feature type="modified residue" description="Phosphoserine" evidence="14">
    <location>
        <position position="90"/>
    </location>
</feature>
<feature type="modified residue" description="Phosphoserine" evidence="2">
    <location>
        <position position="124"/>
    </location>
</feature>
<feature type="modified residue" description="Phosphothreonine" evidence="5">
    <location>
        <position position="155"/>
    </location>
</feature>
<feature type="modified residue" description="Phosphoserine" evidence="5">
    <location>
        <position position="157"/>
    </location>
</feature>
<feature type="glycosylation site" description="N-linked (GlcNAc...) asparagine" evidence="6">
    <location>
        <position position="443"/>
    </location>
</feature>
<feature type="glycosylation site" description="N-linked (GlcNAc...) asparagine" evidence="6">
    <location>
        <position position="482"/>
    </location>
</feature>
<feature type="glycosylation site" description="N-linked (GlcNAc...) asparagine" evidence="6">
    <location>
        <position position="915"/>
    </location>
</feature>
<feature type="glycosylation site" description="N-linked (GlcNAc...) asparagine" evidence="6">
    <location>
        <position position="938"/>
    </location>
</feature>
<feature type="glycosylation site" description="N-linked (GlcNAc...) asparagine" evidence="6">
    <location>
        <position position="1257"/>
    </location>
</feature>
<feature type="glycosylation site" description="N-linked (GlcNAc...) asparagine" evidence="6">
    <location>
        <position position="1606"/>
    </location>
</feature>
<feature type="glycosylation site" description="N-linked (GlcNAc...) asparagine" evidence="6">
    <location>
        <position position="1702"/>
    </location>
</feature>
<feature type="glycosylation site" description="N-linked (GlcNAc...) asparagine" evidence="6">
    <location>
        <position position="1739"/>
    </location>
</feature>
<feature type="glycosylation site" description="N-linked (GlcNAc...) asparagine" evidence="6">
    <location>
        <position position="1763"/>
    </location>
</feature>
<feature type="glycosylation site" description="N-linked (GlcNAc...) asparagine" evidence="6">
    <location>
        <position position="1797"/>
    </location>
</feature>
<feature type="glycosylation site" description="N-linked (GlcNAc...) asparagine" evidence="6">
    <location>
        <position position="1882"/>
    </location>
</feature>
<feature type="glycosylation site" description="N-linked (GlcNAc...) asparagine" evidence="6">
    <location>
        <position position="1983"/>
    </location>
</feature>
<feature type="glycosylation site" description="N-linked (GlcNAc...) asparagine" evidence="6">
    <location>
        <position position="2187"/>
    </location>
</feature>
<feature type="glycosylation site" description="N-linked (GlcNAc...) asparagine" evidence="6">
    <location>
        <position position="2327"/>
    </location>
</feature>
<feature type="glycosylation site" description="N-linked (GlcNAc...) asparagine" evidence="6">
    <location>
        <position position="2638"/>
    </location>
</feature>
<feature type="disulfide bond" evidence="7">
    <location>
        <begin position="576"/>
        <end position="586"/>
    </location>
</feature>
<feature type="disulfide bond" evidence="7">
    <location>
        <begin position="580"/>
        <end position="591"/>
    </location>
</feature>
<feature type="disulfide bond" evidence="7">
    <location>
        <begin position="593"/>
        <end position="602"/>
    </location>
</feature>
<feature type="disulfide bond" evidence="7">
    <location>
        <begin position="611"/>
        <end position="622"/>
    </location>
</feature>
<feature type="disulfide bond" evidence="7">
    <location>
        <begin position="624"/>
        <end position="633"/>
    </location>
</feature>
<feature type="disulfide bond" evidence="7">
    <location>
        <begin position="640"/>
        <end position="651"/>
    </location>
</feature>
<feature type="disulfide bond" evidence="7">
    <location>
        <begin position="645"/>
        <end position="656"/>
    </location>
</feature>
<feature type="disulfide bond" evidence="7">
    <location>
        <begin position="658"/>
        <end position="667"/>
    </location>
</feature>
<feature type="disulfide bond" evidence="7">
    <location>
        <begin position="672"/>
        <end position="683"/>
    </location>
</feature>
<feature type="disulfide bond" evidence="7">
    <location>
        <begin position="677"/>
        <end position="688"/>
    </location>
</feature>
<feature type="disulfide bond" evidence="7">
    <location>
        <begin position="690"/>
        <end position="699"/>
    </location>
</feature>
<feature type="disulfide bond" evidence="7">
    <location>
        <begin position="710"/>
        <end position="723"/>
    </location>
</feature>
<feature type="disulfide bond" evidence="7">
    <location>
        <begin position="725"/>
        <end position="734"/>
    </location>
</feature>
<feature type="disulfide bond" evidence="7">
    <location>
        <begin position="738"/>
        <end position="748"/>
    </location>
</feature>
<feature type="disulfide bond" evidence="7">
    <location>
        <begin position="742"/>
        <end position="753"/>
    </location>
</feature>
<feature type="disulfide bond" evidence="7">
    <location>
        <begin position="755"/>
        <end position="764"/>
    </location>
</feature>
<feature type="disulfide bond" evidence="7">
    <location>
        <begin position="769"/>
        <end position="779"/>
    </location>
</feature>
<feature type="disulfide bond" evidence="7">
    <location>
        <begin position="773"/>
        <end position="784"/>
    </location>
</feature>
<feature type="disulfide bond" evidence="7">
    <location>
        <begin position="786"/>
        <end position="795"/>
    </location>
</feature>
<feature type="disulfide bond" evidence="7">
    <location>
        <begin position="800"/>
        <end position="810"/>
    </location>
</feature>
<feature type="disulfide bond" evidence="7">
    <location>
        <begin position="804"/>
        <end position="819"/>
    </location>
</feature>
<feature type="disulfide bond" evidence="7">
    <location>
        <begin position="821"/>
        <end position="830"/>
    </location>
</feature>
<feature type="sequence conflict" description="In Ref. 2; CAI35934/CAI36038/CAI35942/CAI35945/CAI35947/CAI35084 and 3; CAB57282." evidence="13" ref="2 3">
    <original>V</original>
    <variation>VE</variation>
    <location>
        <position position="736"/>
    </location>
</feature>
<feature type="sequence conflict" description="In Ref. 2; CAI35083/CAI35084/CAI35933/CAI35934/CAI35941/CAI35942/CAI35944/CAI35945/CAI35946/CAI35947/CAI36037/CAI36038 and 4; AAF28317." evidence="13" ref="2 4">
    <original>Y</original>
    <variation>F</variation>
    <location>
        <position position="2369"/>
    </location>
</feature>
<feature type="sequence conflict" description="In Ref. 2; CAI35083/CAI35084/CAI35933/CAI35934/CAI35941/CAI35942/CAI35944/CAI35945/CAI35946/CAI35947/CAI36037/CAI36038 and 5; BAC65737." evidence="13" ref="2 5">
    <original>G</original>
    <variation>R</variation>
    <location>
        <position position="2690"/>
    </location>
</feature>
<evidence type="ECO:0000250" key="1"/>
<evidence type="ECO:0000250" key="2">
    <source>
        <dbReference type="UniProtKB" id="Q3UHK6"/>
    </source>
</evidence>
<evidence type="ECO:0000250" key="3">
    <source>
        <dbReference type="UniProtKB" id="Q9DER5"/>
    </source>
</evidence>
<evidence type="ECO:0000250" key="4">
    <source>
        <dbReference type="UniProtKB" id="Q9NT68"/>
    </source>
</evidence>
<evidence type="ECO:0000250" key="5">
    <source>
        <dbReference type="UniProtKB" id="Q9R1K2"/>
    </source>
</evidence>
<evidence type="ECO:0000255" key="6"/>
<evidence type="ECO:0000255" key="7">
    <source>
        <dbReference type="PROSITE-ProRule" id="PRU00076"/>
    </source>
</evidence>
<evidence type="ECO:0000255" key="8">
    <source>
        <dbReference type="PROSITE-ProRule" id="PRU00694"/>
    </source>
</evidence>
<evidence type="ECO:0000256" key="9">
    <source>
        <dbReference type="SAM" id="MobiDB-lite"/>
    </source>
</evidence>
<evidence type="ECO:0000269" key="10">
    <source>
    </source>
</evidence>
<evidence type="ECO:0000269" key="11">
    <source>
    </source>
</evidence>
<evidence type="ECO:0000269" key="12">
    <source>
    </source>
</evidence>
<evidence type="ECO:0000305" key="13"/>
<evidence type="ECO:0007744" key="14">
    <source>
    </source>
</evidence>
<gene>
    <name type="primary">Tenm2</name>
    <name type="synonym">Kiaa1127</name>
    <name type="synonym">Odz2</name>
    <name type="synonym">Tnm2</name>
</gene>
<reference key="1">
    <citation type="journal article" date="1999" name="J. Cell Biol.">
        <title>Mouse ten-m/Odz is a new family of dimeric type II transmembrane proteins expressed in many tissues.</title>
        <authorList>
            <person name="Oohashi T."/>
            <person name="Zhou X.-H."/>
            <person name="Feng K."/>
            <person name="Richter B."/>
            <person name="Moergelin M."/>
            <person name="Perez M.T."/>
            <person name="Su W.D."/>
            <person name="Chiquet-Ehrismann R."/>
            <person name="Rauch U."/>
            <person name="Faessler R."/>
        </authorList>
    </citation>
    <scope>NUCLEOTIDE SEQUENCE [MRNA]</scope>
    <source>
        <strain>BALB/cJ</strain>
        <tissue>Brain</tissue>
    </source>
</reference>
<reference key="2">
    <citation type="journal article" date="2009" name="PLoS Biol.">
        <title>Lineage-specific biology revealed by a finished genome assembly of the mouse.</title>
        <authorList>
            <person name="Church D.M."/>
            <person name="Goodstadt L."/>
            <person name="Hillier L.W."/>
            <person name="Zody M.C."/>
            <person name="Goldstein S."/>
            <person name="She X."/>
            <person name="Bult C.J."/>
            <person name="Agarwala R."/>
            <person name="Cherry J.L."/>
            <person name="DiCuccio M."/>
            <person name="Hlavina W."/>
            <person name="Kapustin Y."/>
            <person name="Meric P."/>
            <person name="Maglott D."/>
            <person name="Birtle Z."/>
            <person name="Marques A.C."/>
            <person name="Graves T."/>
            <person name="Zhou S."/>
            <person name="Teague B."/>
            <person name="Potamousis K."/>
            <person name="Churas C."/>
            <person name="Place M."/>
            <person name="Herschleb J."/>
            <person name="Runnheim R."/>
            <person name="Forrest D."/>
            <person name="Amos-Landgraf J."/>
            <person name="Schwartz D.C."/>
            <person name="Cheng Z."/>
            <person name="Lindblad-Toh K."/>
            <person name="Eichler E.E."/>
            <person name="Ponting C.P."/>
        </authorList>
    </citation>
    <scope>NUCLEOTIDE SEQUENCE [LARGE SCALE GENOMIC DNA]</scope>
    <source>
        <strain>C57BL/6J</strain>
    </source>
</reference>
<reference key="3">
    <citation type="journal article" date="1999" name="Dev. Biol.">
        <title>Teneurins: a novel family of neuronal cell surface proteins in vertebrates, homologous to the Drosophila pair-rule gene product Ten-m.</title>
        <authorList>
            <person name="Rubin B.P."/>
            <person name="Tucker R.P."/>
            <person name="Martin D."/>
            <person name="Chiquet-Ehrismann R."/>
        </authorList>
    </citation>
    <scope>NUCLEOTIDE SEQUENCE [MRNA] OF 572-799</scope>
</reference>
<reference key="4">
    <citation type="journal article" date="2000" name="Dev. Biol.">
        <title>The mammalian Odz gene family: homologs of a Drosophila pair-rule gene with expression implying distinct yet overlapping developmental roles.</title>
        <authorList>
            <person name="Ben-Zur T."/>
            <person name="Feige E."/>
            <person name="Motro B."/>
            <person name="Wides R."/>
        </authorList>
    </citation>
    <scope>NUCLEOTIDE SEQUENCE [MRNA] OF 1835-2764</scope>
</reference>
<reference key="5">
    <citation type="journal article" date="2003" name="DNA Res.">
        <title>Prediction of the coding sequences of mouse homologues of KIAA gene: II. The complete nucleotide sequences of 400 mouse KIAA-homologous cDNAs identified by screening of terminal sequences of cDNA clones randomly sampled from size-fractionated libraries.</title>
        <authorList>
            <person name="Okazaki N."/>
            <person name="Kikuno R."/>
            <person name="Ohara R."/>
            <person name="Inamoto S."/>
            <person name="Aizawa H."/>
            <person name="Yuasa S."/>
            <person name="Nakajima D."/>
            <person name="Nagase T."/>
            <person name="Ohara O."/>
            <person name="Koga H."/>
        </authorList>
    </citation>
    <scope>NUCLEOTIDE SEQUENCE [LARGE SCALE MRNA] OF 2512-2764</scope>
    <source>
        <tissue>Brain</tissue>
    </source>
</reference>
<reference key="6">
    <citation type="journal article" date="2002" name="J. Biol. Chem.">
        <title>All four members of the Ten-m/Odz family of transmembrane proteins form dimers.</title>
        <authorList>
            <person name="Feng K."/>
            <person name="Zhou X.H."/>
            <person name="Oohashi T."/>
            <person name="Morgelin M."/>
            <person name="Lustig A."/>
            <person name="Hirakawa S."/>
            <person name="Ninomiya Y."/>
            <person name="Engel J."/>
            <person name="Rauch U."/>
            <person name="Fassler R."/>
        </authorList>
    </citation>
    <scope>HOMODIMERIZATION</scope>
    <scope>HETERODIMERIZATION</scope>
</reference>
<reference key="7">
    <citation type="journal article" date="2003" name="Gene Expr. Patterns">
        <title>The murine Ten-m/Odz genes show distinct but overlapping expression patterns during development and in adult brain.</title>
        <authorList>
            <person name="Zhou X.H."/>
            <person name="Brandau O."/>
            <person name="Feng K."/>
            <person name="Oohashi T."/>
            <person name="Ninomiya Y."/>
            <person name="Rauch U."/>
            <person name="Fassler R."/>
        </authorList>
    </citation>
    <scope>TISSUE SPECIFICITY</scope>
    <scope>DEVELOPMENTAL STAGE</scope>
</reference>
<reference key="8">
    <citation type="journal article" date="2010" name="Cell">
        <title>A tissue-specific atlas of mouse protein phosphorylation and expression.</title>
        <authorList>
            <person name="Huttlin E.L."/>
            <person name="Jedrychowski M.P."/>
            <person name="Elias J.E."/>
            <person name="Goswami T."/>
            <person name="Rad R."/>
            <person name="Beausoleil S.A."/>
            <person name="Villen J."/>
            <person name="Haas W."/>
            <person name="Sowa M.E."/>
            <person name="Gygi S.P."/>
        </authorList>
    </citation>
    <scope>PHOSPHORYLATION [LARGE SCALE ANALYSIS] AT SER-90</scope>
    <scope>IDENTIFICATION BY MASS SPECTROMETRY [LARGE SCALE ANALYSIS]</scope>
    <source>
        <tissue>Brain</tissue>
    </source>
</reference>
<reference key="9">
    <citation type="journal article" date="2019" name="Science">
        <title>Latrophilin GPCRs direct synapse specificity by coincident binding of FLRTs and teneurins.</title>
        <authorList>
            <person name="Sando R."/>
            <person name="Jiang X."/>
            <person name="Suedhof T.C."/>
        </authorList>
    </citation>
    <scope>FUNCTION</scope>
    <scope>SUBCELLULAR LOCATION</scope>
</reference>
<sequence>MDVKDRRHRSLTRGRCGKECRYTSSSLDSEDCRVPTQKSYSSSETLKAYDHDSRMHYGNRVTDLVHRESDEFSRQGTNFTLAELGICEPSPHRSGYCSDMGILHQGYSLSTGSDADSDTEGGMSPEHAIRLWGRGIKSRRSSGLSSRENSALTLTDSDNENKSDDDNGRPIPPTSSSSLLPSAQLPSSHNPPPVSCQMPLLDSNTSHQIMDTNPDEEFSPNSYLLRACSGPQQASSSGPPNHHSQSTLRPPLPPPHNHTLSHHHSSANSLNRNSLTNRRSQIHAPAPAPNDLATTPESVQLQDSWVLNSNVPLETRHFLFKTSSGSTPLFSSSSPGYPLTSGTVYTPPPRLLPRNTFSRKAFKLKKPSKYCSWKCAALSAIAAALLLAILLAYFIAMHLLGLNWQLQPADGHTFNNGVRTGLPGNDDVATVPSGGKVPWSLKNSSIDSGEAEVGRRVTQEVPPGVFWRSQIHISQPQFLKFNISLGKDALFGVYIRRGLPPSHAQYDFMERLDGKEKWSVVESPRERRSIQTLVQNEAVFVQYLDVGLWHLAFYNDGKDKEMVSFNTVVLDSVQDCPRNCHGNGECVSGLCHCFPGFLGADCAKAACPVLCSGNGQYSKGTCQCYSGWKGAECDVPMNQCIDPSCGGHGSCIDGNCVCAAGYKGEHCEEVDCLDPTCSSHGVCVNGECLCSPGWGGLNCELARVQCPDQCSGHGTYLPDSGLCSCDPNWMGPDCSVVCSVDCGTHGVCIGGACRCEEGWTGAACDQRVCHPRCIEHGTCKDGKCECREGWNGEHCTIDGCPDLCNGNGRCTLGQNSWQCVCQTGWRGPGCNVAMETSCADNKDNEGDGLVDCLDPDCCLQSACQNSLLCRGSRDPLDIIQQGQTDWPAVKSFYDRIKLLAGKDSTHIIPGDNPFNSSLVSLIRGQVVTMDGTPLVGVNVSFVKYPKYGYTITRQDGTFDLIANGGSALTLHFERAPFMSQERTVWLPWNSFYAMDTLVMKTEENSIPSCDLSGFVRPDPIIISSPLSTFFSASPASNPIVPETQVLHEEIELPGTNVKLRYLSSRTAGYKSLLKITMTQSTVPLNLIRVHLMVAVEGHLFQKSFQASPNLAYTFIWDKTDAYGQRVYGLSDAVVSVGFEYETCPSLILWEKRTALLQGFELDPSNLGGWSLDKHHTLNVKSGILHKGTGENQFLTQQPAIITSIMGNGRRRSISCPSCNGLAEGNKLLAPVALAVGIDGSLFVGDFNYIRRIFPSRNVTSILELRNKEFKHSNSPGHKYYLAVDPVTGSLYVSDTNSRRIYRVKSLSGAKDLAGNSEVVAGTGEQCLPFDEARCGDGGKAVDATLMSPRGIAVDKNGLMYFVDATMIRKVDQNGIISTLLGSNDLTAVRPLSCDSSMDVAQVRLEWPTDLAVNPMDNSLYVLENNVILRITENHQVSIIAGRPMHCQVPGIDYSLSKLAIHSALESASAIAISHTGVLYITETDEKKINRLRQVTTNGEICLLAGAASDCDCKNDVNCICYSGDDAYATDAILNSPSSLAVAPDGTIYIADLGNIRIRAVSKNKPVLNAFNQYEAASPGEQELYVFNADGIHQYTVSLVTGEYLYNFTYSADNDVTELIDNNGNSLKIRRDSSGMPRHLLMPDNQIITLTVGTNGGLKAVSTQNLELGLMTYDGNTGLLATKSDETGWTTFYDYDHEGRLTNVTRPTGVVTSLHREMEKSITIDIENSNRDDDVTVITNLSSVEASYTVVQDQVRNSYQLCNNGTLRVMYANGMAVSFHSEPHVLAGTITPTIGRCNISLPMENGLNSIEWRLRKEQIKGKVTIFGRKLRVHGRNLLSIDYDRNIRTEKIYDDHRKFTLRIIYDQVGRPFLWLPSSGLAAVNVSYFFNGRLAGLQRGAMSERTDIDKQGRIVSRMFADGKVWSYSYLDKSMVLLLQSQRQYIFEYDSSDRLHAVTMPSVARHSMSTHTSIGYIRNIYNPPESNASVIFDYSDDGRILKTSFLGTGRQVFYKYGKLSKLSEIVYDSTAVTFGYDETTGVLKMVNLQSGGFSCTIRYRKVGPLVDKQIYRFSEEGMINARFDYTYHDNSFRIASIKPVISETPLPVDLYRYDEISGKVEHFGKFGVIYYDINQIITTAVMTLSKHFDTHGRIKEVQYEMFRSLMYWMTVQYDSMGRVIKRELKLGPYANTTKYTYDYDGDGQLQSVAVNDRPTWRYSYDLNGNLHLLNPGNSARLMPLRYDLRDRITRLGDVQYKIDDDGYLCQRGSDIFEYNSKGLLTRAYNKASGWSVQYRYDGVGRRASYKTNLGHHLQYFYSDLHNPTRITHVYNHSNSEITSLYYDLQGHLFAMESSSGEEYYVASDNTGTPLAVYSINGLMIKQLQYTAYGEIYYDSNPDFQMVIGFHGGLYDPLTKLVHFTQRDYDVLAGRWTSPDYTMWRNVGKEPAPFNLYMFKNNNPLSNELDLKNYVTDVKSWLVMFGFQLSNIIPGFPRAKMYFVPPPYELSESQASENGQLITGVQQTTERHNQAFLALEGQVITKKLHASIREKAGHWFATTTPIIGKGIMFAIKEGRVTTGVSSIASEDSRKVASVLNNAYYLDKMHYSIEGKDTHYFVKIGAADGDLVTLGTTIGRKVLESGVNVTVSQPTLLVNGRTRRFTNIEFQYSTLLLSIRYGLTPDTLDEEKARVLDQAGQRALGTAWAKEQQKARDGREGSRLWTEGEKQQLLSTGRVQGYEGYYVLPVEQYPELADSSSNIQFLRQNEMGKR</sequence>
<accession>Q9WTS5</accession>
<accession>Q5NBW7</accession>
<accession>Q5NBW8</accession>
<accession>Q80TJ0</accession>
<accession>Q9JLC0</accession>
<accession>Q9QYZ1</accession>
<protein>
    <recommendedName>
        <fullName>Teneurin-2</fullName>
        <shortName>Ten-2</shortName>
    </recommendedName>
    <alternativeName>
        <fullName>Protein Odd Oz/ten-m homolog 2</fullName>
    </alternativeName>
    <alternativeName>
        <fullName>Tenascin-M2</fullName>
        <shortName>Ten-m2</shortName>
    </alternativeName>
    <alternativeName>
        <fullName>Teneurin transmembrane protein 2</fullName>
    </alternativeName>
    <component>
        <recommendedName>
            <fullName>Ten-2, soluble form</fullName>
        </recommendedName>
    </component>
    <component>
        <recommendedName>
            <fullName>Ten-2 intracellular domain</fullName>
            <shortName>Ten-2 ICD</shortName>
        </recommendedName>
    </component>
</protein>
<organism>
    <name type="scientific">Mus musculus</name>
    <name type="common">Mouse</name>
    <dbReference type="NCBI Taxonomy" id="10090"/>
    <lineage>
        <taxon>Eukaryota</taxon>
        <taxon>Metazoa</taxon>
        <taxon>Chordata</taxon>
        <taxon>Craniata</taxon>
        <taxon>Vertebrata</taxon>
        <taxon>Euteleostomi</taxon>
        <taxon>Mammalia</taxon>
        <taxon>Eutheria</taxon>
        <taxon>Euarchontoglires</taxon>
        <taxon>Glires</taxon>
        <taxon>Rodentia</taxon>
        <taxon>Myomorpha</taxon>
        <taxon>Muroidea</taxon>
        <taxon>Muridae</taxon>
        <taxon>Murinae</taxon>
        <taxon>Mus</taxon>
        <taxon>Mus</taxon>
    </lineage>
</organism>
<name>TEN2_MOUSE</name>